<dbReference type="EC" id="4.1.1.23" evidence="1"/>
<dbReference type="EMBL" id="AM421808">
    <property type="protein sequence ID" value="CAM10056.1"/>
    <property type="molecule type" value="Genomic_DNA"/>
</dbReference>
<dbReference type="RefSeq" id="WP_002217549.1">
    <property type="nucleotide sequence ID" value="NC_008767.1"/>
</dbReference>
<dbReference type="SMR" id="A1KT74"/>
<dbReference type="GeneID" id="93386352"/>
<dbReference type="KEGG" id="nmc:NMC0768"/>
<dbReference type="HOGENOM" id="CLU_067069_0_0_4"/>
<dbReference type="UniPathway" id="UPA00070">
    <property type="reaction ID" value="UER00120"/>
</dbReference>
<dbReference type="Proteomes" id="UP000002286">
    <property type="component" value="Chromosome"/>
</dbReference>
<dbReference type="GO" id="GO:0005829">
    <property type="term" value="C:cytosol"/>
    <property type="evidence" value="ECO:0007669"/>
    <property type="project" value="TreeGrafter"/>
</dbReference>
<dbReference type="GO" id="GO:0004590">
    <property type="term" value="F:orotidine-5'-phosphate decarboxylase activity"/>
    <property type="evidence" value="ECO:0007669"/>
    <property type="project" value="UniProtKB-UniRule"/>
</dbReference>
<dbReference type="GO" id="GO:0006207">
    <property type="term" value="P:'de novo' pyrimidine nucleobase biosynthetic process"/>
    <property type="evidence" value="ECO:0007669"/>
    <property type="project" value="InterPro"/>
</dbReference>
<dbReference type="GO" id="GO:0044205">
    <property type="term" value="P:'de novo' UMP biosynthetic process"/>
    <property type="evidence" value="ECO:0007669"/>
    <property type="project" value="UniProtKB-UniRule"/>
</dbReference>
<dbReference type="CDD" id="cd04725">
    <property type="entry name" value="OMP_decarboxylase_like"/>
    <property type="match status" value="1"/>
</dbReference>
<dbReference type="FunFam" id="3.20.20.70:FF:000015">
    <property type="entry name" value="Orotidine 5'-phosphate decarboxylase"/>
    <property type="match status" value="1"/>
</dbReference>
<dbReference type="Gene3D" id="3.20.20.70">
    <property type="entry name" value="Aldolase class I"/>
    <property type="match status" value="1"/>
</dbReference>
<dbReference type="HAMAP" id="MF_01200_B">
    <property type="entry name" value="OMPdecase_type1_B"/>
    <property type="match status" value="1"/>
</dbReference>
<dbReference type="InterPro" id="IPR013785">
    <property type="entry name" value="Aldolase_TIM"/>
</dbReference>
<dbReference type="InterPro" id="IPR014732">
    <property type="entry name" value="OMPdecase"/>
</dbReference>
<dbReference type="InterPro" id="IPR018089">
    <property type="entry name" value="OMPdecase_AS"/>
</dbReference>
<dbReference type="InterPro" id="IPR047596">
    <property type="entry name" value="OMPdecase_bac"/>
</dbReference>
<dbReference type="InterPro" id="IPR001754">
    <property type="entry name" value="OMPdeCOase_dom"/>
</dbReference>
<dbReference type="InterPro" id="IPR011060">
    <property type="entry name" value="RibuloseP-bd_barrel"/>
</dbReference>
<dbReference type="NCBIfam" id="NF001273">
    <property type="entry name" value="PRK00230.1"/>
    <property type="match status" value="1"/>
</dbReference>
<dbReference type="NCBIfam" id="TIGR01740">
    <property type="entry name" value="pyrF"/>
    <property type="match status" value="1"/>
</dbReference>
<dbReference type="PANTHER" id="PTHR32119">
    <property type="entry name" value="OROTIDINE 5'-PHOSPHATE DECARBOXYLASE"/>
    <property type="match status" value="1"/>
</dbReference>
<dbReference type="PANTHER" id="PTHR32119:SF2">
    <property type="entry name" value="OROTIDINE 5'-PHOSPHATE DECARBOXYLASE"/>
    <property type="match status" value="1"/>
</dbReference>
<dbReference type="Pfam" id="PF00215">
    <property type="entry name" value="OMPdecase"/>
    <property type="match status" value="1"/>
</dbReference>
<dbReference type="SMART" id="SM00934">
    <property type="entry name" value="OMPdecase"/>
    <property type="match status" value="1"/>
</dbReference>
<dbReference type="SUPFAM" id="SSF51366">
    <property type="entry name" value="Ribulose-phoshate binding barrel"/>
    <property type="match status" value="1"/>
</dbReference>
<dbReference type="PROSITE" id="PS00156">
    <property type="entry name" value="OMPDECASE"/>
    <property type="match status" value="1"/>
</dbReference>
<protein>
    <recommendedName>
        <fullName evidence="1">Orotidine 5'-phosphate decarboxylase</fullName>
        <ecNumber evidence="1">4.1.1.23</ecNumber>
    </recommendedName>
    <alternativeName>
        <fullName evidence="1">OMP decarboxylase</fullName>
        <shortName evidence="1">OMPDCase</shortName>
        <shortName evidence="1">OMPdecase</shortName>
    </alternativeName>
</protein>
<gene>
    <name evidence="1" type="primary">pyrF</name>
    <name type="ordered locus">NMC0768</name>
</gene>
<feature type="chain" id="PRO_1000065920" description="Orotidine 5'-phosphate decarboxylase">
    <location>
        <begin position="1"/>
        <end position="246"/>
    </location>
</feature>
<feature type="active site" description="Proton donor" evidence="1">
    <location>
        <position position="73"/>
    </location>
</feature>
<feature type="binding site" evidence="1">
    <location>
        <position position="22"/>
    </location>
    <ligand>
        <name>substrate</name>
    </ligand>
</feature>
<feature type="binding site" evidence="1">
    <location>
        <position position="44"/>
    </location>
    <ligand>
        <name>substrate</name>
    </ligand>
</feature>
<feature type="binding site" evidence="1">
    <location>
        <begin position="71"/>
        <end position="80"/>
    </location>
    <ligand>
        <name>substrate</name>
    </ligand>
</feature>
<feature type="binding site" evidence="1">
    <location>
        <position position="130"/>
    </location>
    <ligand>
        <name>substrate</name>
    </ligand>
</feature>
<feature type="binding site" evidence="1">
    <location>
        <position position="191"/>
    </location>
    <ligand>
        <name>substrate</name>
    </ligand>
</feature>
<feature type="binding site" evidence="1">
    <location>
        <position position="201"/>
    </location>
    <ligand>
        <name>substrate</name>
    </ligand>
</feature>
<feature type="binding site" evidence="1">
    <location>
        <position position="221"/>
    </location>
    <ligand>
        <name>substrate</name>
    </ligand>
</feature>
<feature type="binding site" evidence="1">
    <location>
        <position position="222"/>
    </location>
    <ligand>
        <name>substrate</name>
    </ligand>
</feature>
<reference key="1">
    <citation type="journal article" date="2007" name="PLoS Genet.">
        <title>Meningococcal genetic variation mechanisms viewed through comparative analysis of serogroup C strain FAM18.</title>
        <authorList>
            <person name="Bentley S.D."/>
            <person name="Vernikos G.S."/>
            <person name="Snyder L.A.S."/>
            <person name="Churcher C."/>
            <person name="Arrowsmith C."/>
            <person name="Chillingworth T."/>
            <person name="Cronin A."/>
            <person name="Davis P.H."/>
            <person name="Holroyd N.E."/>
            <person name="Jagels K."/>
            <person name="Maddison M."/>
            <person name="Moule S."/>
            <person name="Rabbinowitsch E."/>
            <person name="Sharp S."/>
            <person name="Unwin L."/>
            <person name="Whitehead S."/>
            <person name="Quail M.A."/>
            <person name="Achtman M."/>
            <person name="Barrell B.G."/>
            <person name="Saunders N.J."/>
            <person name="Parkhill J."/>
        </authorList>
    </citation>
    <scope>NUCLEOTIDE SEQUENCE [LARGE SCALE GENOMIC DNA]</scope>
    <source>
        <strain>ATCC 700532 / DSM 15464 / FAM18</strain>
    </source>
</reference>
<organism>
    <name type="scientific">Neisseria meningitidis serogroup C / serotype 2a (strain ATCC 700532 / DSM 15464 / FAM18)</name>
    <dbReference type="NCBI Taxonomy" id="272831"/>
    <lineage>
        <taxon>Bacteria</taxon>
        <taxon>Pseudomonadati</taxon>
        <taxon>Pseudomonadota</taxon>
        <taxon>Betaproteobacteria</taxon>
        <taxon>Neisseriales</taxon>
        <taxon>Neisseriaceae</taxon>
        <taxon>Neisseria</taxon>
    </lineage>
</organism>
<keyword id="KW-0210">Decarboxylase</keyword>
<keyword id="KW-0456">Lyase</keyword>
<keyword id="KW-0665">Pyrimidine biosynthesis</keyword>
<comment type="function">
    <text evidence="1">Catalyzes the decarboxylation of orotidine 5'-monophosphate (OMP) to uridine 5'-monophosphate (UMP).</text>
</comment>
<comment type="catalytic activity">
    <reaction evidence="1">
        <text>orotidine 5'-phosphate + H(+) = UMP + CO2</text>
        <dbReference type="Rhea" id="RHEA:11596"/>
        <dbReference type="ChEBI" id="CHEBI:15378"/>
        <dbReference type="ChEBI" id="CHEBI:16526"/>
        <dbReference type="ChEBI" id="CHEBI:57538"/>
        <dbReference type="ChEBI" id="CHEBI:57865"/>
        <dbReference type="EC" id="4.1.1.23"/>
    </reaction>
</comment>
<comment type="pathway">
    <text evidence="1">Pyrimidine metabolism; UMP biosynthesis via de novo pathway; UMP from orotate: step 2/2.</text>
</comment>
<comment type="subunit">
    <text evidence="1">Homodimer.</text>
</comment>
<comment type="similarity">
    <text evidence="1">Belongs to the OMP decarboxylase family. Type 1 subfamily.</text>
</comment>
<sequence>MNPLISDFQTPQQRTPVIVALDFSNEKDTLGFVRNLDPTLCQIKIGKELFTATGRNLAESLINQGFKLFLDLKYHDIPHTVAQACKVAADMGVWMVDMHASGGRRMMEAAAEAVAGYGTKPLLIGVTVLTSMEQSDLAEIGLNTAPEEQVIRLAKLAQSSGLDGVVCSAQEAAPLRRELGQDFVLVTPGIRLDVAGNNDDQRRIMTPAEALAAGSTYLVMGRPVTQAADPVAVLREVNRVANLEAN</sequence>
<accession>A1KT74</accession>
<name>PYRF_NEIMF</name>
<evidence type="ECO:0000255" key="1">
    <source>
        <dbReference type="HAMAP-Rule" id="MF_01200"/>
    </source>
</evidence>
<proteinExistence type="inferred from homology"/>